<gene>
    <name type="primary">STB3</name>
    <name type="ordered locus">YDR169C</name>
    <name type="ORF">YD9489.04c</name>
</gene>
<comment type="subunit">
    <text evidence="4">Interacts with SIN3.</text>
</comment>
<comment type="subcellular location">
    <subcellularLocation>
        <location evidence="2">Cytoplasm</location>
    </subcellularLocation>
</comment>
<comment type="miscellaneous">
    <text evidence="3">Present with 639 molecules/cell in log phase SD medium.</text>
</comment>
<comment type="similarity">
    <text evidence="5">Belongs to the STB3 family.</text>
</comment>
<organism>
    <name type="scientific">Saccharomyces cerevisiae (strain ATCC 204508 / S288c)</name>
    <name type="common">Baker's yeast</name>
    <dbReference type="NCBI Taxonomy" id="559292"/>
    <lineage>
        <taxon>Eukaryota</taxon>
        <taxon>Fungi</taxon>
        <taxon>Dikarya</taxon>
        <taxon>Ascomycota</taxon>
        <taxon>Saccharomycotina</taxon>
        <taxon>Saccharomycetes</taxon>
        <taxon>Saccharomycetales</taxon>
        <taxon>Saccharomycetaceae</taxon>
        <taxon>Saccharomyces</taxon>
    </lineage>
</organism>
<proteinExistence type="evidence at protein level"/>
<sequence>MSENQKEVSPPQAISVKSEASSSIFSKPISTSSPAGLAAAQRVTPGKLSTLLLEMGPLAIRHITQTLCLDIPCFKDLSSSKQRRLIMSAMESGDKEKSVVFEKIGWGQWSAKRVDPANFDKELEATNFANAKVKDLISQESQRRKSNNSNSNSGGKVEMPMKVEHNITNIDGATTPPTAVASTTIPVNIKRSKSPLAAANVVYIDENALASEDEDEEFDEDDHHLHYQNKSRNSSNNFGKSSNGDPYSFGRRRSQVVFADSTPENIEHEIIAQKIRPLLRNRRRSSIKPHTPFISKLNTHQDSSYLSPNTTSTTTPSNNNSNSNQAKIDLEKLTATSEPTSRRASRLSVSKESSIRSTLFPNKNYLIVTTNPNSKATSVSTSPKLEEQMNVSSNPIVLSDKEKHRVASQHLNGESSPQLVPHSHHQPHSDTDEEDWESIGAASLRNNSLAPNIDSVASSTNGVVSPKPTNPSFTNSQNGDIEPPLQHDQQKHEQQPRNGEDNSAAFLLMSLKS</sequence>
<reference key="1">
    <citation type="journal article" date="1997" name="Mol. Gen. Genet.">
        <title>Identification of the Saccharomyces cerevisiae genes STB1-STB5 encoding Sin3p binding proteins.</title>
        <authorList>
            <person name="Kasten M.M."/>
            <person name="Stillman D.J."/>
        </authorList>
    </citation>
    <scope>NUCLEOTIDE SEQUENCE [GENOMIC DNA]</scope>
    <scope>INTERACTION WITH SIN3</scope>
</reference>
<reference key="2">
    <citation type="journal article" date="1997" name="Nature">
        <title>The nucleotide sequence of Saccharomyces cerevisiae chromosome IV.</title>
        <authorList>
            <person name="Jacq C."/>
            <person name="Alt-Moerbe J."/>
            <person name="Andre B."/>
            <person name="Arnold W."/>
            <person name="Bahr A."/>
            <person name="Ballesta J.P.G."/>
            <person name="Bargues M."/>
            <person name="Baron L."/>
            <person name="Becker A."/>
            <person name="Biteau N."/>
            <person name="Bloecker H."/>
            <person name="Blugeon C."/>
            <person name="Boskovic J."/>
            <person name="Brandt P."/>
            <person name="Brueckner M."/>
            <person name="Buitrago M.J."/>
            <person name="Coster F."/>
            <person name="Delaveau T."/>
            <person name="del Rey F."/>
            <person name="Dujon B."/>
            <person name="Eide L.G."/>
            <person name="Garcia-Cantalejo J.M."/>
            <person name="Goffeau A."/>
            <person name="Gomez-Peris A."/>
            <person name="Granotier C."/>
            <person name="Hanemann V."/>
            <person name="Hankeln T."/>
            <person name="Hoheisel J.D."/>
            <person name="Jaeger W."/>
            <person name="Jimenez A."/>
            <person name="Jonniaux J.-L."/>
            <person name="Kraemer C."/>
            <person name="Kuester H."/>
            <person name="Laamanen P."/>
            <person name="Legros Y."/>
            <person name="Louis E.J."/>
            <person name="Moeller-Rieker S."/>
            <person name="Monnet A."/>
            <person name="Moro M."/>
            <person name="Mueller-Auer S."/>
            <person name="Nussbaumer B."/>
            <person name="Paricio N."/>
            <person name="Paulin L."/>
            <person name="Perea J."/>
            <person name="Perez-Alonso M."/>
            <person name="Perez-Ortin J.E."/>
            <person name="Pohl T.M."/>
            <person name="Prydz H."/>
            <person name="Purnelle B."/>
            <person name="Rasmussen S.W."/>
            <person name="Remacha M.A."/>
            <person name="Revuelta J.L."/>
            <person name="Rieger M."/>
            <person name="Salom D."/>
            <person name="Saluz H.P."/>
            <person name="Saiz J.E."/>
            <person name="Saren A.-M."/>
            <person name="Schaefer M."/>
            <person name="Scharfe M."/>
            <person name="Schmidt E.R."/>
            <person name="Schneider C."/>
            <person name="Scholler P."/>
            <person name="Schwarz S."/>
            <person name="Soler-Mira A."/>
            <person name="Urrestarazu L.A."/>
            <person name="Verhasselt P."/>
            <person name="Vissers S."/>
            <person name="Voet M."/>
            <person name="Volckaert G."/>
            <person name="Wagner G."/>
            <person name="Wambutt R."/>
            <person name="Wedler E."/>
            <person name="Wedler H."/>
            <person name="Woelfl S."/>
            <person name="Harris D.E."/>
            <person name="Bowman S."/>
            <person name="Brown D."/>
            <person name="Churcher C.M."/>
            <person name="Connor R."/>
            <person name="Dedman K."/>
            <person name="Gentles S."/>
            <person name="Hamlin N."/>
            <person name="Hunt S."/>
            <person name="Jones L."/>
            <person name="McDonald S."/>
            <person name="Murphy L.D."/>
            <person name="Niblett D."/>
            <person name="Odell C."/>
            <person name="Oliver K."/>
            <person name="Rajandream M.A."/>
            <person name="Richards C."/>
            <person name="Shore L."/>
            <person name="Walsh S.V."/>
            <person name="Barrell B.G."/>
            <person name="Dietrich F.S."/>
            <person name="Mulligan J.T."/>
            <person name="Allen E."/>
            <person name="Araujo R."/>
            <person name="Aviles E."/>
            <person name="Berno A."/>
            <person name="Carpenter J."/>
            <person name="Chen E."/>
            <person name="Cherry J.M."/>
            <person name="Chung E."/>
            <person name="Duncan M."/>
            <person name="Hunicke-Smith S."/>
            <person name="Hyman R.W."/>
            <person name="Komp C."/>
            <person name="Lashkari D."/>
            <person name="Lew H."/>
            <person name="Lin D."/>
            <person name="Mosedale D."/>
            <person name="Nakahara K."/>
            <person name="Namath A."/>
            <person name="Oefner P."/>
            <person name="Oh C."/>
            <person name="Petel F.X."/>
            <person name="Roberts D."/>
            <person name="Schramm S."/>
            <person name="Schroeder M."/>
            <person name="Shogren T."/>
            <person name="Shroff N."/>
            <person name="Winant A."/>
            <person name="Yelton M.A."/>
            <person name="Botstein D."/>
            <person name="Davis R.W."/>
            <person name="Johnston M."/>
            <person name="Andrews S."/>
            <person name="Brinkman R."/>
            <person name="Cooper J."/>
            <person name="Ding H."/>
            <person name="Du Z."/>
            <person name="Favello A."/>
            <person name="Fulton L."/>
            <person name="Gattung S."/>
            <person name="Greco T."/>
            <person name="Hallsworth K."/>
            <person name="Hawkins J."/>
            <person name="Hillier L.W."/>
            <person name="Jier M."/>
            <person name="Johnson D."/>
            <person name="Johnston L."/>
            <person name="Kirsten J."/>
            <person name="Kucaba T."/>
            <person name="Langston Y."/>
            <person name="Latreille P."/>
            <person name="Le T."/>
            <person name="Mardis E."/>
            <person name="Menezes S."/>
            <person name="Miller N."/>
            <person name="Nhan M."/>
            <person name="Pauley A."/>
            <person name="Peluso D."/>
            <person name="Rifkin L."/>
            <person name="Riles L."/>
            <person name="Taich A."/>
            <person name="Trevaskis E."/>
            <person name="Vignati D."/>
            <person name="Wilcox L."/>
            <person name="Wohldman P."/>
            <person name="Vaudin M."/>
            <person name="Wilson R."/>
            <person name="Waterston R."/>
            <person name="Albermann K."/>
            <person name="Hani J."/>
            <person name="Heumann K."/>
            <person name="Kleine K."/>
            <person name="Mewes H.-W."/>
            <person name="Zollner A."/>
            <person name="Zaccaria P."/>
        </authorList>
    </citation>
    <scope>NUCLEOTIDE SEQUENCE [LARGE SCALE GENOMIC DNA]</scope>
    <source>
        <strain>ATCC 204508 / S288c</strain>
    </source>
</reference>
<reference key="3">
    <citation type="journal article" date="2014" name="G3 (Bethesda)">
        <title>The reference genome sequence of Saccharomyces cerevisiae: Then and now.</title>
        <authorList>
            <person name="Engel S.R."/>
            <person name="Dietrich F.S."/>
            <person name="Fisk D.G."/>
            <person name="Binkley G."/>
            <person name="Balakrishnan R."/>
            <person name="Costanzo M.C."/>
            <person name="Dwight S.S."/>
            <person name="Hitz B.C."/>
            <person name="Karra K."/>
            <person name="Nash R.S."/>
            <person name="Weng S."/>
            <person name="Wong E.D."/>
            <person name="Lloyd P."/>
            <person name="Skrzypek M.S."/>
            <person name="Miyasato S.R."/>
            <person name="Simison M."/>
            <person name="Cherry J.M."/>
        </authorList>
    </citation>
    <scope>GENOME REANNOTATION</scope>
    <source>
        <strain>ATCC 204508 / S288c</strain>
    </source>
</reference>
<reference key="4">
    <citation type="journal article" date="2003" name="Nature">
        <title>Global analysis of protein localization in budding yeast.</title>
        <authorList>
            <person name="Huh W.-K."/>
            <person name="Falvo J.V."/>
            <person name="Gerke L.C."/>
            <person name="Carroll A.S."/>
            <person name="Howson R.W."/>
            <person name="Weissman J.S."/>
            <person name="O'Shea E.K."/>
        </authorList>
    </citation>
    <scope>SUBCELLULAR LOCATION [LARGE SCALE ANALYSIS]</scope>
</reference>
<reference key="5">
    <citation type="journal article" date="2003" name="Nature">
        <title>Global analysis of protein expression in yeast.</title>
        <authorList>
            <person name="Ghaemmaghami S."/>
            <person name="Huh W.-K."/>
            <person name="Bower K."/>
            <person name="Howson R.W."/>
            <person name="Belle A."/>
            <person name="Dephoure N."/>
            <person name="O'Shea E.K."/>
            <person name="Weissman J.S."/>
        </authorList>
    </citation>
    <scope>LEVEL OF PROTEIN EXPRESSION [LARGE SCALE ANALYSIS]</scope>
</reference>
<reference key="6">
    <citation type="journal article" date="2007" name="J. Proteome Res.">
        <title>Large-scale phosphorylation analysis of alpha-factor-arrested Saccharomyces cerevisiae.</title>
        <authorList>
            <person name="Li X."/>
            <person name="Gerber S.A."/>
            <person name="Rudner A.D."/>
            <person name="Beausoleil S.A."/>
            <person name="Haas W."/>
            <person name="Villen J."/>
            <person name="Elias J.E."/>
            <person name="Gygi S.P."/>
        </authorList>
    </citation>
    <scope>PHOSPHORYLATION [LARGE SCALE ANALYSIS] AT SER-254</scope>
    <scope>IDENTIFICATION BY MASS SPECTROMETRY [LARGE SCALE ANALYSIS]</scope>
    <source>
        <strain>ADR376</strain>
    </source>
</reference>
<reference key="7">
    <citation type="journal article" date="2007" name="Proc. Natl. Acad. Sci. U.S.A.">
        <title>Analysis of phosphorylation sites on proteins from Saccharomyces cerevisiae by electron transfer dissociation (ETD) mass spectrometry.</title>
        <authorList>
            <person name="Chi A."/>
            <person name="Huttenhower C."/>
            <person name="Geer L.Y."/>
            <person name="Coon J.J."/>
            <person name="Syka J.E.P."/>
            <person name="Bai D.L."/>
            <person name="Shabanowitz J."/>
            <person name="Burke D.J."/>
            <person name="Troyanskaya O.G."/>
            <person name="Hunt D.F."/>
        </authorList>
    </citation>
    <scope>IDENTIFICATION BY MASS SPECTROMETRY [LARGE SCALE ANALYSIS]</scope>
</reference>
<reference key="8">
    <citation type="journal article" date="2008" name="Mol. Cell. Proteomics">
        <title>A multidimensional chromatography technology for in-depth phosphoproteome analysis.</title>
        <authorList>
            <person name="Albuquerque C.P."/>
            <person name="Smolka M.B."/>
            <person name="Payne S.H."/>
            <person name="Bafna V."/>
            <person name="Eng J."/>
            <person name="Zhou H."/>
        </authorList>
    </citation>
    <scope>PHOSPHORYLATION [LARGE SCALE ANALYSIS] AT SER-254</scope>
    <scope>IDENTIFICATION BY MASS SPECTROMETRY [LARGE SCALE ANALYSIS]</scope>
</reference>
<reference key="9">
    <citation type="journal article" date="2009" name="Science">
        <title>Global analysis of Cdk1 substrate phosphorylation sites provides insights into evolution.</title>
        <authorList>
            <person name="Holt L.J."/>
            <person name="Tuch B.B."/>
            <person name="Villen J."/>
            <person name="Johnson A.D."/>
            <person name="Gygi S.P."/>
            <person name="Morgan D.O."/>
        </authorList>
    </citation>
    <scope>PHOSPHORYLATION [LARGE SCALE ANALYSIS] AT SER-254</scope>
    <scope>IDENTIFICATION BY MASS SPECTROMETRY [LARGE SCALE ANALYSIS]</scope>
</reference>
<keyword id="KW-0963">Cytoplasm</keyword>
<keyword id="KW-0597">Phosphoprotein</keyword>
<keyword id="KW-1185">Reference proteome</keyword>
<name>STB3_YEAST</name>
<protein>
    <recommendedName>
        <fullName>Protein STB3</fullName>
    </recommendedName>
    <alternativeName>
        <fullName>SIN3-binding protein 3</fullName>
    </alternativeName>
</protein>
<evidence type="ECO:0000256" key="1">
    <source>
        <dbReference type="SAM" id="MobiDB-lite"/>
    </source>
</evidence>
<evidence type="ECO:0000269" key="2">
    <source>
    </source>
</evidence>
<evidence type="ECO:0000269" key="3">
    <source>
    </source>
</evidence>
<evidence type="ECO:0000269" key="4">
    <source>
    </source>
</evidence>
<evidence type="ECO:0000305" key="5"/>
<evidence type="ECO:0007744" key="6">
    <source>
    </source>
</evidence>
<evidence type="ECO:0007744" key="7">
    <source>
    </source>
</evidence>
<evidence type="ECO:0007744" key="8">
    <source>
    </source>
</evidence>
<feature type="chain" id="PRO_0000072254" description="Protein STB3">
    <location>
        <begin position="1"/>
        <end position="513"/>
    </location>
</feature>
<feature type="region of interest" description="Disordered" evidence="1">
    <location>
        <begin position="1"/>
        <end position="20"/>
    </location>
</feature>
<feature type="region of interest" description="Disordered" evidence="1">
    <location>
        <begin position="134"/>
        <end position="159"/>
    </location>
</feature>
<feature type="region of interest" description="Disordered" evidence="1">
    <location>
        <begin position="227"/>
        <end position="249"/>
    </location>
</feature>
<feature type="region of interest" description="Disordered" evidence="1">
    <location>
        <begin position="282"/>
        <end position="354"/>
    </location>
</feature>
<feature type="region of interest" description="Disordered" evidence="1">
    <location>
        <begin position="373"/>
        <end position="437"/>
    </location>
</feature>
<feature type="region of interest" description="Disordered" evidence="1">
    <location>
        <begin position="450"/>
        <end position="513"/>
    </location>
</feature>
<feature type="compositionally biased region" description="Basic and acidic residues" evidence="1">
    <location>
        <begin position="134"/>
        <end position="143"/>
    </location>
</feature>
<feature type="compositionally biased region" description="Low complexity" evidence="1">
    <location>
        <begin position="230"/>
        <end position="244"/>
    </location>
</feature>
<feature type="compositionally biased region" description="Polar residues" evidence="1">
    <location>
        <begin position="296"/>
        <end position="306"/>
    </location>
</feature>
<feature type="compositionally biased region" description="Low complexity" evidence="1">
    <location>
        <begin position="307"/>
        <end position="324"/>
    </location>
</feature>
<feature type="compositionally biased region" description="Polar residues" evidence="1">
    <location>
        <begin position="373"/>
        <end position="396"/>
    </location>
</feature>
<feature type="compositionally biased region" description="Polar residues" evidence="1">
    <location>
        <begin position="409"/>
        <end position="418"/>
    </location>
</feature>
<feature type="compositionally biased region" description="Polar residues" evidence="1">
    <location>
        <begin position="450"/>
        <end position="463"/>
    </location>
</feature>
<feature type="compositionally biased region" description="Polar residues" evidence="1">
    <location>
        <begin position="470"/>
        <end position="479"/>
    </location>
</feature>
<feature type="compositionally biased region" description="Basic and acidic residues" evidence="1">
    <location>
        <begin position="488"/>
        <end position="500"/>
    </location>
</feature>
<feature type="modified residue" description="Phosphoserine" evidence="6 7 8">
    <location>
        <position position="254"/>
    </location>
</feature>
<accession>Q12427</accession>
<accession>D6VSE9</accession>
<dbReference type="EMBL" id="U33440">
    <property type="protein sequence ID" value="AAA75483.1"/>
    <property type="molecule type" value="Genomic_DNA"/>
</dbReference>
<dbReference type="EMBL" id="Z47813">
    <property type="protein sequence ID" value="CAA87800.1"/>
    <property type="molecule type" value="Genomic_DNA"/>
</dbReference>
<dbReference type="EMBL" id="BK006938">
    <property type="protein sequence ID" value="DAA12009.1"/>
    <property type="molecule type" value="Genomic_DNA"/>
</dbReference>
<dbReference type="PIR" id="S50915">
    <property type="entry name" value="S50915"/>
</dbReference>
<dbReference type="RefSeq" id="NP_010453.1">
    <property type="nucleotide sequence ID" value="NM_001180476.1"/>
</dbReference>
<dbReference type="BioGRID" id="32220">
    <property type="interactions" value="95"/>
</dbReference>
<dbReference type="DIP" id="DIP-2486N"/>
<dbReference type="FunCoup" id="Q12427">
    <property type="interactions" value="101"/>
</dbReference>
<dbReference type="IntAct" id="Q12427">
    <property type="interactions" value="7"/>
</dbReference>
<dbReference type="MINT" id="Q12427"/>
<dbReference type="STRING" id="4932.YDR169C"/>
<dbReference type="GlyGen" id="Q12427">
    <property type="glycosylation" value="3 sites, 1 O-linked glycan (2 sites)"/>
</dbReference>
<dbReference type="iPTMnet" id="Q12427"/>
<dbReference type="PaxDb" id="4932-YDR169C"/>
<dbReference type="PeptideAtlas" id="Q12427"/>
<dbReference type="TopDownProteomics" id="Q12427"/>
<dbReference type="EnsemblFungi" id="YDR169C_mRNA">
    <property type="protein sequence ID" value="YDR169C"/>
    <property type="gene ID" value="YDR169C"/>
</dbReference>
<dbReference type="GeneID" id="851747"/>
<dbReference type="KEGG" id="sce:YDR169C"/>
<dbReference type="AGR" id="SGD:S000002576"/>
<dbReference type="SGD" id="S000002576">
    <property type="gene designation" value="STB3"/>
</dbReference>
<dbReference type="VEuPathDB" id="FungiDB:YDR169C"/>
<dbReference type="eggNOG" id="ENOG502QW7S">
    <property type="taxonomic scope" value="Eukaryota"/>
</dbReference>
<dbReference type="HOGENOM" id="CLU_039968_0_0_1"/>
<dbReference type="InParanoid" id="Q12427"/>
<dbReference type="OMA" id="FAKIGWG"/>
<dbReference type="OrthoDB" id="5391991at2759"/>
<dbReference type="BioCyc" id="YEAST:G3O-29758-MONOMER"/>
<dbReference type="BioGRID-ORCS" id="851747">
    <property type="hits" value="1 hit in 13 CRISPR screens"/>
</dbReference>
<dbReference type="PRO" id="PR:Q12427"/>
<dbReference type="Proteomes" id="UP000002311">
    <property type="component" value="Chromosome IV"/>
</dbReference>
<dbReference type="RNAct" id="Q12427">
    <property type="molecule type" value="protein"/>
</dbReference>
<dbReference type="GO" id="GO:0005737">
    <property type="term" value="C:cytoplasm"/>
    <property type="evidence" value="ECO:0000314"/>
    <property type="project" value="SGD"/>
</dbReference>
<dbReference type="GO" id="GO:0005634">
    <property type="term" value="C:nucleus"/>
    <property type="evidence" value="ECO:0000314"/>
    <property type="project" value="SGD"/>
</dbReference>
<dbReference type="GO" id="GO:0001228">
    <property type="term" value="F:DNA-binding transcription activator activity, RNA polymerase II-specific"/>
    <property type="evidence" value="ECO:0000315"/>
    <property type="project" value="SGD"/>
</dbReference>
<dbReference type="GO" id="GO:0043565">
    <property type="term" value="F:sequence-specific DNA binding"/>
    <property type="evidence" value="ECO:0000314"/>
    <property type="project" value="SGD"/>
</dbReference>
<dbReference type="GO" id="GO:0000976">
    <property type="term" value="F:transcription cis-regulatory region binding"/>
    <property type="evidence" value="ECO:0000315"/>
    <property type="project" value="SGD"/>
</dbReference>
<dbReference type="GO" id="GO:0071333">
    <property type="term" value="P:cellular response to glucose stimulus"/>
    <property type="evidence" value="ECO:0000315"/>
    <property type="project" value="SGD"/>
</dbReference>
<dbReference type="GO" id="GO:0045944">
    <property type="term" value="P:positive regulation of transcription by RNA polymerase II"/>
    <property type="evidence" value="ECO:0000315"/>
    <property type="project" value="SGD"/>
</dbReference>
<dbReference type="InterPro" id="IPR018818">
    <property type="entry name" value="Stb3"/>
</dbReference>
<dbReference type="PANTHER" id="PTHR28164">
    <property type="entry name" value="PROTEIN STB3"/>
    <property type="match status" value="1"/>
</dbReference>
<dbReference type="PANTHER" id="PTHR28164:SF1">
    <property type="entry name" value="PROTEIN STB3"/>
    <property type="match status" value="1"/>
</dbReference>
<dbReference type="Pfam" id="PF10330">
    <property type="entry name" value="Stb3"/>
    <property type="match status" value="1"/>
</dbReference>